<protein>
    <recommendedName>
        <fullName evidence="1">Methylated-DNA--protein-cysteine methyltransferase</fullName>
        <ecNumber evidence="1">2.1.1.63</ecNumber>
    </recommendedName>
    <alternativeName>
        <fullName evidence="1">6-O-methylguanine-DNA methyltransferase</fullName>
        <shortName evidence="1">MGMT</shortName>
    </alternativeName>
    <alternativeName>
        <fullName evidence="1">O-6-methylguanine-DNA-alkyltransferase</fullName>
    </alternativeName>
</protein>
<feature type="chain" id="PRO_0000139378" description="Methylated-DNA--protein-cysteine methyltransferase">
    <location>
        <begin position="1"/>
        <end position="131"/>
    </location>
</feature>
<feature type="active site" description="Nucleophile; methyl group acceptor" evidence="1">
    <location>
        <position position="98"/>
    </location>
</feature>
<accession>Q8TZ11</accession>
<evidence type="ECO:0000250" key="1">
    <source>
        <dbReference type="UniProtKB" id="O74023"/>
    </source>
</evidence>
<sequence length="131" mass="14714">MLEVTLPGEGTPPAEGFRTLHSLKRDLERYFRGYPVDFDDVPVRINVSGKPREVLELVREIPYGTVVTYGDIAQKANTHPRVVGVSLARNRVPIIVACHRVVAADGLGGFRWGLEWKRRLLELEGALPSRR</sequence>
<organism>
    <name type="scientific">Methanopyrus kandleri (strain AV19 / DSM 6324 / JCM 9639 / NBRC 100938)</name>
    <dbReference type="NCBI Taxonomy" id="190192"/>
    <lineage>
        <taxon>Archaea</taxon>
        <taxon>Methanobacteriati</taxon>
        <taxon>Methanobacteriota</taxon>
        <taxon>Methanomada group</taxon>
        <taxon>Methanopyri</taxon>
        <taxon>Methanopyrales</taxon>
        <taxon>Methanopyraceae</taxon>
        <taxon>Methanopyrus</taxon>
    </lineage>
</organism>
<dbReference type="EC" id="2.1.1.63" evidence="1"/>
<dbReference type="EMBL" id="AE009439">
    <property type="protein sequence ID" value="AAM01347.1"/>
    <property type="molecule type" value="Genomic_DNA"/>
</dbReference>
<dbReference type="RefSeq" id="WP_011018502.1">
    <property type="nucleotide sequence ID" value="NC_003551.1"/>
</dbReference>
<dbReference type="SMR" id="Q8TZ11"/>
<dbReference type="FunCoup" id="Q8TZ11">
    <property type="interactions" value="3"/>
</dbReference>
<dbReference type="STRING" id="190192.MK0130"/>
<dbReference type="PaxDb" id="190192-MK0130"/>
<dbReference type="EnsemblBacteria" id="AAM01347">
    <property type="protein sequence ID" value="AAM01347"/>
    <property type="gene ID" value="MK0130"/>
</dbReference>
<dbReference type="GeneID" id="1477433"/>
<dbReference type="KEGG" id="mka:MK0130"/>
<dbReference type="PATRIC" id="fig|190192.8.peg.129"/>
<dbReference type="HOGENOM" id="CLU_000445_52_4_2"/>
<dbReference type="InParanoid" id="Q8TZ11"/>
<dbReference type="OrthoDB" id="372118at2157"/>
<dbReference type="Proteomes" id="UP000001826">
    <property type="component" value="Chromosome"/>
</dbReference>
<dbReference type="GO" id="GO:0005737">
    <property type="term" value="C:cytoplasm"/>
    <property type="evidence" value="ECO:0007669"/>
    <property type="project" value="UniProtKB-SubCell"/>
</dbReference>
<dbReference type="GO" id="GO:0003908">
    <property type="term" value="F:methylated-DNA-[protein]-cysteine S-methyltransferase activity"/>
    <property type="evidence" value="ECO:0007669"/>
    <property type="project" value="UniProtKB-EC"/>
</dbReference>
<dbReference type="GO" id="GO:0006281">
    <property type="term" value="P:DNA repair"/>
    <property type="evidence" value="ECO:0007669"/>
    <property type="project" value="UniProtKB-KW"/>
</dbReference>
<dbReference type="GO" id="GO:0032259">
    <property type="term" value="P:methylation"/>
    <property type="evidence" value="ECO:0007669"/>
    <property type="project" value="UniProtKB-KW"/>
</dbReference>
<dbReference type="CDD" id="cd06445">
    <property type="entry name" value="ATase"/>
    <property type="match status" value="1"/>
</dbReference>
<dbReference type="Gene3D" id="1.10.10.10">
    <property type="entry name" value="Winged helix-like DNA-binding domain superfamily/Winged helix DNA-binding domain"/>
    <property type="match status" value="1"/>
</dbReference>
<dbReference type="InterPro" id="IPR014048">
    <property type="entry name" value="MethylDNA_cys_MeTrfase_DNA-bd"/>
</dbReference>
<dbReference type="InterPro" id="IPR036217">
    <property type="entry name" value="MethylDNA_cys_MeTrfase_DNAb"/>
</dbReference>
<dbReference type="InterPro" id="IPR036388">
    <property type="entry name" value="WH-like_DNA-bd_sf"/>
</dbReference>
<dbReference type="NCBIfam" id="TIGR00589">
    <property type="entry name" value="ogt"/>
    <property type="match status" value="1"/>
</dbReference>
<dbReference type="PANTHER" id="PTHR10815">
    <property type="entry name" value="METHYLATED-DNA--PROTEIN-CYSTEINE METHYLTRANSFERASE"/>
    <property type="match status" value="1"/>
</dbReference>
<dbReference type="PANTHER" id="PTHR10815:SF13">
    <property type="entry name" value="METHYLATED-DNA--PROTEIN-CYSTEINE METHYLTRANSFERASE"/>
    <property type="match status" value="1"/>
</dbReference>
<dbReference type="Pfam" id="PF01035">
    <property type="entry name" value="DNA_binding_1"/>
    <property type="match status" value="1"/>
</dbReference>
<dbReference type="SUPFAM" id="SSF46767">
    <property type="entry name" value="Methylated DNA-protein cysteine methyltransferase, C-terminal domain"/>
    <property type="match status" value="1"/>
</dbReference>
<name>OGT_METKA</name>
<gene>
    <name type="primary">ogt</name>
    <name type="ordered locus">MK0130</name>
</gene>
<comment type="function">
    <text evidence="1">Involved in the cellular defense against the biological effects of O6-methylguanine (O6-MeG) and O4-methylthymine (O4-MeT) in DNA. Repairs the methylated nucleobase in DNA by stoichiometrically transferring the methyl group to a cysteine residue in the enzyme. This is a suicide reaction: the enzyme is irreversibly inactivated.</text>
</comment>
<comment type="catalytic activity">
    <reaction evidence="1">
        <text>a 6-O-methyl-2'-deoxyguanosine in DNA + L-cysteinyl-[protein] = S-methyl-L-cysteinyl-[protein] + a 2'-deoxyguanosine in DNA</text>
        <dbReference type="Rhea" id="RHEA:24000"/>
        <dbReference type="Rhea" id="RHEA-COMP:10131"/>
        <dbReference type="Rhea" id="RHEA-COMP:10132"/>
        <dbReference type="Rhea" id="RHEA-COMP:11367"/>
        <dbReference type="Rhea" id="RHEA-COMP:11368"/>
        <dbReference type="ChEBI" id="CHEBI:29950"/>
        <dbReference type="ChEBI" id="CHEBI:82612"/>
        <dbReference type="ChEBI" id="CHEBI:85445"/>
        <dbReference type="ChEBI" id="CHEBI:85448"/>
        <dbReference type="EC" id="2.1.1.63"/>
    </reaction>
</comment>
<comment type="catalytic activity">
    <reaction evidence="1">
        <text>a 4-O-methyl-thymidine in DNA + L-cysteinyl-[protein] = a thymidine in DNA + S-methyl-L-cysteinyl-[protein]</text>
        <dbReference type="Rhea" id="RHEA:53428"/>
        <dbReference type="Rhea" id="RHEA-COMP:10131"/>
        <dbReference type="Rhea" id="RHEA-COMP:10132"/>
        <dbReference type="Rhea" id="RHEA-COMP:13555"/>
        <dbReference type="Rhea" id="RHEA-COMP:13556"/>
        <dbReference type="ChEBI" id="CHEBI:29950"/>
        <dbReference type="ChEBI" id="CHEBI:82612"/>
        <dbReference type="ChEBI" id="CHEBI:137386"/>
        <dbReference type="ChEBI" id="CHEBI:137387"/>
        <dbReference type="EC" id="2.1.1.63"/>
    </reaction>
</comment>
<comment type="subcellular location">
    <subcellularLocation>
        <location evidence="1">Cytoplasm</location>
    </subcellularLocation>
</comment>
<comment type="miscellaneous">
    <text evidence="1">This enzyme catalyzes only one turnover and therefore is not strictly catalytic. According to one definition, an enzyme is a biocatalyst that acts repeatedly and over many reaction cycles.</text>
</comment>
<comment type="similarity">
    <text evidence="1">Belongs to the MGMT family.</text>
</comment>
<proteinExistence type="inferred from homology"/>
<keyword id="KW-0963">Cytoplasm</keyword>
<keyword id="KW-0227">DNA damage</keyword>
<keyword id="KW-0234">DNA repair</keyword>
<keyword id="KW-0489">Methyltransferase</keyword>
<keyword id="KW-1185">Reference proteome</keyword>
<keyword id="KW-0808">Transferase</keyword>
<reference key="1">
    <citation type="journal article" date="2002" name="Proc. Natl. Acad. Sci. U.S.A.">
        <title>The complete genome of hyperthermophile Methanopyrus kandleri AV19 and monophyly of archaeal methanogens.</title>
        <authorList>
            <person name="Slesarev A.I."/>
            <person name="Mezhevaya K.V."/>
            <person name="Makarova K.S."/>
            <person name="Polushin N.N."/>
            <person name="Shcherbinina O.V."/>
            <person name="Shakhova V.V."/>
            <person name="Belova G.I."/>
            <person name="Aravind L."/>
            <person name="Natale D.A."/>
            <person name="Rogozin I.B."/>
            <person name="Tatusov R.L."/>
            <person name="Wolf Y.I."/>
            <person name="Stetter K.O."/>
            <person name="Malykh A.G."/>
            <person name="Koonin E.V."/>
            <person name="Kozyavkin S.A."/>
        </authorList>
    </citation>
    <scope>NUCLEOTIDE SEQUENCE [LARGE SCALE GENOMIC DNA]</scope>
    <source>
        <strain>AV19 / DSM 6324 / JCM 9639 / NBRC 100938</strain>
    </source>
</reference>